<accession>Q4V7A6</accession>
<evidence type="ECO:0000250" key="1"/>
<evidence type="ECO:0000250" key="2">
    <source>
        <dbReference type="UniProtKB" id="Q8WUB8"/>
    </source>
</evidence>
<evidence type="ECO:0000250" key="3">
    <source>
        <dbReference type="UniProtKB" id="Q9D8M7"/>
    </source>
</evidence>
<evidence type="ECO:0000255" key="4">
    <source>
        <dbReference type="PROSITE-ProRule" id="PRU00146"/>
    </source>
</evidence>
<evidence type="ECO:0000256" key="5">
    <source>
        <dbReference type="SAM" id="MobiDB-lite"/>
    </source>
</evidence>
<evidence type="ECO:0000305" key="6"/>
<evidence type="ECO:0007744" key="7">
    <source>
    </source>
</evidence>
<proteinExistence type="evidence at protein level"/>
<dbReference type="EMBL" id="BC098049">
    <property type="protein sequence ID" value="AAH98049.1"/>
    <property type="status" value="ALT_INIT"/>
    <property type="molecule type" value="mRNA"/>
</dbReference>
<dbReference type="RefSeq" id="NP_001019918.3">
    <property type="nucleotide sequence ID" value="NM_001024747.3"/>
</dbReference>
<dbReference type="SMR" id="Q4V7A6"/>
<dbReference type="FunCoup" id="Q4V7A6">
    <property type="interactions" value="1235"/>
</dbReference>
<dbReference type="STRING" id="10116.ENSRNOP00000072702"/>
<dbReference type="GlyGen" id="Q4V7A6">
    <property type="glycosylation" value="1 site"/>
</dbReference>
<dbReference type="iPTMnet" id="Q4V7A6"/>
<dbReference type="PhosphoSitePlus" id="Q4V7A6"/>
<dbReference type="PaxDb" id="10116-ENSRNOP00000020865"/>
<dbReference type="GeneID" id="292404"/>
<dbReference type="UCSC" id="RGD:1305266">
    <property type="organism name" value="rat"/>
</dbReference>
<dbReference type="AGR" id="RGD:1305266"/>
<dbReference type="RGD" id="1305266">
    <property type="gene designation" value="Phf10"/>
</dbReference>
<dbReference type="eggNOG" id="KOG1512">
    <property type="taxonomic scope" value="Eukaryota"/>
</dbReference>
<dbReference type="InParanoid" id="Q4V7A6"/>
<dbReference type="PhylomeDB" id="Q4V7A6"/>
<dbReference type="TreeFam" id="TF318971"/>
<dbReference type="PRO" id="PR:Q4V7A6"/>
<dbReference type="Proteomes" id="UP000002494">
    <property type="component" value="Unplaced"/>
</dbReference>
<dbReference type="GO" id="GO:0000785">
    <property type="term" value="C:chromatin"/>
    <property type="evidence" value="ECO:0000318"/>
    <property type="project" value="GO_Central"/>
</dbReference>
<dbReference type="GO" id="GO:0071564">
    <property type="term" value="C:npBAF complex"/>
    <property type="evidence" value="ECO:0000250"/>
    <property type="project" value="UniProtKB"/>
</dbReference>
<dbReference type="GO" id="GO:0005634">
    <property type="term" value="C:nucleus"/>
    <property type="evidence" value="ECO:0000318"/>
    <property type="project" value="GO_Central"/>
</dbReference>
<dbReference type="GO" id="GO:0003682">
    <property type="term" value="F:chromatin binding"/>
    <property type="evidence" value="ECO:0000318"/>
    <property type="project" value="GO_Central"/>
</dbReference>
<dbReference type="GO" id="GO:0004402">
    <property type="term" value="F:histone acetyltransferase activity"/>
    <property type="evidence" value="ECO:0000318"/>
    <property type="project" value="GO_Central"/>
</dbReference>
<dbReference type="GO" id="GO:0003712">
    <property type="term" value="F:transcription coregulator activity"/>
    <property type="evidence" value="ECO:0000318"/>
    <property type="project" value="GO_Central"/>
</dbReference>
<dbReference type="GO" id="GO:0008270">
    <property type="term" value="F:zinc ion binding"/>
    <property type="evidence" value="ECO:0007669"/>
    <property type="project" value="UniProtKB-KW"/>
</dbReference>
<dbReference type="GO" id="GO:1990403">
    <property type="term" value="P:embryonic brain development"/>
    <property type="evidence" value="ECO:0000270"/>
    <property type="project" value="RGD"/>
</dbReference>
<dbReference type="GO" id="GO:0007399">
    <property type="term" value="P:nervous system development"/>
    <property type="evidence" value="ECO:0000266"/>
    <property type="project" value="RGD"/>
</dbReference>
<dbReference type="GO" id="GO:0006357">
    <property type="term" value="P:regulation of transcription by RNA polymerase II"/>
    <property type="evidence" value="ECO:0000318"/>
    <property type="project" value="GO_Central"/>
</dbReference>
<dbReference type="CDD" id="cd15528">
    <property type="entry name" value="PHD1_PHF10"/>
    <property type="match status" value="1"/>
</dbReference>
<dbReference type="CDD" id="cd15529">
    <property type="entry name" value="PHD2_PHF10"/>
    <property type="match status" value="1"/>
</dbReference>
<dbReference type="CDD" id="cd21085">
    <property type="entry name" value="WH_NTD_PHF10"/>
    <property type="match status" value="1"/>
</dbReference>
<dbReference type="FunFam" id="3.30.40.10:FF:001470">
    <property type="entry name" value="PHD finger protein 10"/>
    <property type="match status" value="1"/>
</dbReference>
<dbReference type="Gene3D" id="3.30.40.10">
    <property type="entry name" value="Zinc/RING finger domain, C3HC4 (zinc finger)"/>
    <property type="match status" value="1"/>
</dbReference>
<dbReference type="InterPro" id="IPR038045">
    <property type="entry name" value="PHF10_PHD_finger_1"/>
</dbReference>
<dbReference type="InterPro" id="IPR011011">
    <property type="entry name" value="Znf_FYVE_PHD"/>
</dbReference>
<dbReference type="InterPro" id="IPR001965">
    <property type="entry name" value="Znf_PHD"/>
</dbReference>
<dbReference type="InterPro" id="IPR019787">
    <property type="entry name" value="Znf_PHD-finger"/>
</dbReference>
<dbReference type="InterPro" id="IPR013083">
    <property type="entry name" value="Znf_RING/FYVE/PHD"/>
</dbReference>
<dbReference type="PANTHER" id="PTHR45888">
    <property type="entry name" value="HL01030P-RELATED"/>
    <property type="match status" value="1"/>
</dbReference>
<dbReference type="PANTHER" id="PTHR45888:SF4">
    <property type="entry name" value="PHD FINGER PROTEIN 10"/>
    <property type="match status" value="1"/>
</dbReference>
<dbReference type="Pfam" id="PF00628">
    <property type="entry name" value="PHD"/>
    <property type="match status" value="2"/>
</dbReference>
<dbReference type="SMART" id="SM00249">
    <property type="entry name" value="PHD"/>
    <property type="match status" value="2"/>
</dbReference>
<dbReference type="SUPFAM" id="SSF57903">
    <property type="entry name" value="FYVE/PHD zinc finger"/>
    <property type="match status" value="2"/>
</dbReference>
<dbReference type="PROSITE" id="PS01359">
    <property type="entry name" value="ZF_PHD_1"/>
    <property type="match status" value="1"/>
</dbReference>
<dbReference type="PROSITE" id="PS50016">
    <property type="entry name" value="ZF_PHD_2"/>
    <property type="match status" value="2"/>
</dbReference>
<keyword id="KW-1017">Isopeptide bond</keyword>
<keyword id="KW-0479">Metal-binding</keyword>
<keyword id="KW-0524">Neurogenesis</keyword>
<keyword id="KW-0539">Nucleus</keyword>
<keyword id="KW-0597">Phosphoprotein</keyword>
<keyword id="KW-1185">Reference proteome</keyword>
<keyword id="KW-0677">Repeat</keyword>
<keyword id="KW-0804">Transcription</keyword>
<keyword id="KW-0805">Transcription regulation</keyword>
<keyword id="KW-0832">Ubl conjugation</keyword>
<keyword id="KW-0862">Zinc</keyword>
<keyword id="KW-0863">Zinc-finger</keyword>
<sequence length="497" mass="55884">MAAAGPGAALSPRRCDSDPASPGAQSPKDDNEDNSNDGGHPSKRRRMGSGDSSRSCETSSQDLSFSYYPAENLIEYKWPPDETGEYYMLQEQVSEYLGVTSFKRKYPDLERRDLSHKEKLYLRELNVITETQCTLGLTALRSDEVIDLMIKEYPAKHAEYSVILQEKERQRITDHYKEYSQMQQQSTQKVEASKVPEYIKKAAKKAAEFNSNLNRERMEERRAYFDLQTHVIQVPQGKYKVLPTDRTKVSSYPVALIPGQFQEYYKRYSPDELRYLPLNTALYEPPLDPELPALDSDGDSDDGEDGGGDEKRKNKGTSDSSSGNVSEGDSPPDSQEDTFQGRQKSKDKMATPRKDGSKRSVLSKSVPGYKPKVIPNALCGICLKGKESNKKGKAESLIHCSQCDNSGHPSCLDMTMELVSMIKTYPWQCMECKTCIICGQPHHEEEMMFCDVCDRGYHTFCVGLGAIPSGRWICDCCQRAPPTPRKVGRRGKNSKEG</sequence>
<protein>
    <recommendedName>
        <fullName>PHD finger protein 10</fullName>
    </recommendedName>
    <alternativeName>
        <fullName>BRG1-associated factor 45a</fullName>
        <shortName>BAF45a</shortName>
    </alternativeName>
</protein>
<reference key="1">
    <citation type="journal article" date="2004" name="Genome Res.">
        <title>The status, quality, and expansion of the NIH full-length cDNA project: the Mammalian Gene Collection (MGC).</title>
        <authorList>
            <consortium name="The MGC Project Team"/>
        </authorList>
    </citation>
    <scope>NUCLEOTIDE SEQUENCE [LARGE SCALE MRNA]</scope>
    <source>
        <tissue>Testis</tissue>
    </source>
</reference>
<reference key="2">
    <citation type="journal article" date="2012" name="Nat. Commun.">
        <title>Quantitative maps of protein phosphorylation sites across 14 different rat organs and tissues.</title>
        <authorList>
            <person name="Lundby A."/>
            <person name="Secher A."/>
            <person name="Lage K."/>
            <person name="Nordsborg N.B."/>
            <person name="Dmytriyev A."/>
            <person name="Lundby C."/>
            <person name="Olsen J.V."/>
        </authorList>
    </citation>
    <scope>PHOSPHORYLATION [LARGE SCALE ANALYSIS] AT SER-269; SER-296; SER-300 AND SER-326</scope>
    <scope>IDENTIFICATION BY MASS SPECTROMETRY [LARGE SCALE ANALYSIS]</scope>
</reference>
<name>PHF10_RAT</name>
<comment type="function">
    <text evidence="1">Involved in transcription activity regulation by chromatin remodeling. Belongs to the neural progenitors-specific chromatin remodeling complex (npBAF complex) and is required for the proliferation of neural progenitors. During neural development a switch from a stem/progenitor to a post-mitotic chromatin remodeling mechanism occurs as neurons exit the cell cycle and become committed to their adult state. The transition from proliferating neural stem/progenitor cells to post-mitotic neurons requires a switch in subunit composition of the npBAF and nBAF complexes. As neural progenitors exit mitosis and differentiate into neurons, npBAF complexes which contain ACTL6A/BAF53A and PHF10/BAF45A, are exchanged for homologous alternative ACTL6B/BAF53B and DPF1/BAF45B or DPF3/BAF45C subunits in neuron-specific complexes (nBAF). The npBAF complex is essential for the self-renewal/proliferative capacity of the multipotent neural stem cells. The nBAF complex along with CREST plays a role regulating the activity of genes essential for dendrite growth (By similarity).</text>
</comment>
<comment type="subunit">
    <text evidence="1">Component of neural progenitors-specific chromatin remodeling complex (npBAF complex) composed of at least, ARID1A/BAF250A or ARID1B/BAF250B, SMARCD1/BAF60A, SMARCD3/BAF60C, SMARCA2/BRM/BAF190B, SMARCA4/BRG1/BAF190A, SMARCB1/BAF47, SMARCC1/BAF155, SMARCE1/BAF57, SMARCC2/BAF170, PHF10/BAF45A, ACTL6A/BAF53A and actin. Interacts with ACTL6A/BAF53A, SMARCA2/BRM/BAF190B, SMARCA4/BRG1/BAF190A and PBRM1/BAF180 (By similarity).</text>
</comment>
<comment type="subcellular location">
    <subcellularLocation>
        <location evidence="1">Nucleus</location>
    </subcellularLocation>
</comment>
<comment type="similarity">
    <text evidence="6">Belongs to the SAYP family.</text>
</comment>
<comment type="caution">
    <text evidence="6">It is uncertain whether Met-1 or Met-88 is the initiator.</text>
</comment>
<comment type="sequence caution" evidence="6">
    <conflict type="erroneous initiation">
        <sequence resource="EMBL-CDS" id="AAH98049"/>
    </conflict>
    <text>Truncated N-terminus.</text>
</comment>
<gene>
    <name type="primary">Phf10</name>
    <name type="synonym">Baf45a</name>
</gene>
<organism>
    <name type="scientific">Rattus norvegicus</name>
    <name type="common">Rat</name>
    <dbReference type="NCBI Taxonomy" id="10116"/>
    <lineage>
        <taxon>Eukaryota</taxon>
        <taxon>Metazoa</taxon>
        <taxon>Chordata</taxon>
        <taxon>Craniata</taxon>
        <taxon>Vertebrata</taxon>
        <taxon>Euteleostomi</taxon>
        <taxon>Mammalia</taxon>
        <taxon>Eutheria</taxon>
        <taxon>Euarchontoglires</taxon>
        <taxon>Glires</taxon>
        <taxon>Rodentia</taxon>
        <taxon>Myomorpha</taxon>
        <taxon>Muroidea</taxon>
        <taxon>Muridae</taxon>
        <taxon>Murinae</taxon>
        <taxon>Rattus</taxon>
    </lineage>
</organism>
<feature type="chain" id="PRO_0000391320" description="PHD finger protein 10">
    <location>
        <begin position="1"/>
        <end position="497"/>
    </location>
</feature>
<feature type="zinc finger region" description="PHD-type 1; degenerate" evidence="4">
    <location>
        <begin position="378"/>
        <end position="435"/>
    </location>
</feature>
<feature type="zinc finger region" description="PHD-type 2; degenerate" evidence="4">
    <location>
        <begin position="437"/>
        <end position="480"/>
    </location>
</feature>
<feature type="region of interest" description="Disordered" evidence="5">
    <location>
        <begin position="1"/>
        <end position="61"/>
    </location>
</feature>
<feature type="region of interest" description="SAY">
    <location>
        <begin position="88"/>
        <end position="294"/>
    </location>
</feature>
<feature type="region of interest" description="Essential to induce neural progenitor proliferation" evidence="1">
    <location>
        <begin position="88"/>
        <end position="184"/>
    </location>
</feature>
<feature type="region of interest" description="Disordered" evidence="5">
    <location>
        <begin position="284"/>
        <end position="367"/>
    </location>
</feature>
<feature type="region of interest" description="Essential to induce neural progenitor proliferation" evidence="1">
    <location>
        <begin position="291"/>
        <end position="333"/>
    </location>
</feature>
<feature type="compositionally biased region" description="Low complexity" evidence="5">
    <location>
        <begin position="284"/>
        <end position="295"/>
    </location>
</feature>
<feature type="compositionally biased region" description="Acidic residues" evidence="5">
    <location>
        <begin position="296"/>
        <end position="307"/>
    </location>
</feature>
<feature type="compositionally biased region" description="Polar residues" evidence="5">
    <location>
        <begin position="317"/>
        <end position="327"/>
    </location>
</feature>
<feature type="compositionally biased region" description="Basic and acidic residues" evidence="5">
    <location>
        <begin position="344"/>
        <end position="358"/>
    </location>
</feature>
<feature type="modified residue" description="Phosphoserine" evidence="2">
    <location>
        <position position="11"/>
    </location>
</feature>
<feature type="modified residue" description="Phosphoserine" evidence="2">
    <location>
        <position position="35"/>
    </location>
</feature>
<feature type="modified residue" description="Phosphoserine" evidence="2">
    <location>
        <position position="49"/>
    </location>
</feature>
<feature type="modified residue" description="Phosphoserine" evidence="7">
    <location>
        <position position="269"/>
    </location>
</feature>
<feature type="modified residue" description="Phosphoserine" evidence="7">
    <location>
        <position position="296"/>
    </location>
</feature>
<feature type="modified residue" description="Phosphoserine" evidence="7">
    <location>
        <position position="300"/>
    </location>
</feature>
<feature type="modified residue" description="Phosphoserine" evidence="7">
    <location>
        <position position="326"/>
    </location>
</feature>
<feature type="modified residue" description="Phosphoserine" evidence="3">
    <location>
        <position position="330"/>
    </location>
</feature>
<feature type="cross-link" description="Glycyl lysine isopeptide (Lys-Gly) (interchain with G-Cter in SUMO2)" evidence="2">
    <location>
        <position position="240"/>
    </location>
</feature>
<feature type="cross-link" description="Glycyl lysine isopeptide (Lys-Gly) (interchain with G-Cter in SUMO2)" evidence="2">
    <location>
        <position position="384"/>
    </location>
</feature>